<feature type="signal peptide" evidence="5">
    <location>
        <begin position="1"/>
        <end position="21"/>
    </location>
</feature>
<feature type="chain" id="PRO_0000394818" description="Probable mannosyl-oligosaccharide alpha-1,2-mannosidase 1B">
    <location>
        <begin position="22"/>
        <end position="510"/>
    </location>
</feature>
<feature type="active site" description="Proton donor" evidence="2">
    <location>
        <position position="375"/>
    </location>
</feature>
<feature type="binding site" evidence="3">
    <location>
        <position position="501"/>
    </location>
    <ligand>
        <name>Ca(2+)</name>
        <dbReference type="ChEBI" id="CHEBI:29108"/>
    </ligand>
</feature>
<feature type="glycosylation site" description="N-linked (GlcNAc...) asparagine" evidence="5">
    <location>
        <position position="35"/>
    </location>
</feature>
<feature type="glycosylation site" description="N-linked (GlcNAc...) asparagine" evidence="5">
    <location>
        <position position="95"/>
    </location>
</feature>
<feature type="glycosylation site" description="N-linked (GlcNAc...) asparagine" evidence="5">
    <location>
        <position position="182"/>
    </location>
</feature>
<feature type="glycosylation site" description="N-linked (GlcNAc...) asparagine" evidence="5">
    <location>
        <position position="249"/>
    </location>
</feature>
<feature type="glycosylation site" description="N-linked (GlcNAc...) asparagine" evidence="5">
    <location>
        <position position="366"/>
    </location>
</feature>
<feature type="disulfide bond" evidence="3">
    <location>
        <begin position="332"/>
        <end position="361"/>
    </location>
</feature>
<accession>B8N417</accession>
<name>MNS1B_ASPFN</name>
<reference key="1">
    <citation type="journal article" date="2015" name="Genome Announc.">
        <title>Genome sequence of Aspergillus flavus NRRL 3357, a strain that causes aflatoxin contamination of food and feed.</title>
        <authorList>
            <person name="Nierman W.C."/>
            <person name="Yu J."/>
            <person name="Fedorova-Abrams N.D."/>
            <person name="Losada L."/>
            <person name="Cleveland T.E."/>
            <person name="Bhatnagar D."/>
            <person name="Bennett J.W."/>
            <person name="Dean R."/>
            <person name="Payne G.A."/>
        </authorList>
    </citation>
    <scope>NUCLEOTIDE SEQUENCE [LARGE SCALE GENOMIC DNA]</scope>
    <source>
        <strain>ATCC 200026 / FGSC A1120 / IAM 13836 / NRRL 3357 / JCM 12722 / SRRC 167</strain>
    </source>
</reference>
<sequence length="510" mass="56631">MHFSSLSLPLTALSLVTPSLAYPQFKFEQRVARSNSSESRANAVKEAFVHAWDGYMQYAYPHDELHPISNGVGDSRNGWGASAVDALSTAVIMGNETIVNQILDHIATIDYSKTDDQVSLFETTIRYLGGMLSGYDLLKGPASNLVKDQAKVKTLLDQSQNLADVLKFAFDTPSGIPYNNINITSHGNDGATTNGLAVTGTLVLEWTRLSDLTGDTEYAQLSQKAEDYLLNPSPKSAEPFEGLVGSHINISNGAFADGQVSWNGGDDSFYEYLIKMYVYDPKRFSTYGDRWVKAAESSIKHLASHPEKRPDLTFLASYNDGQYGLSSQHLTCFDGGSFLLGGTVLDRDDFIQFGLDLVKGCHETYNQTLTGIGPESFGWDPKNVPSDQKELYERAGFYISSGAYILRPEVIESFYYAWRITGQEIYREWVWNAFVNINKYCRTDSGFAGLTNVNAANGGGRYDNQESFLFAEVLKYVYLTFAPDNEWQVQRGKGNKFVYNTEAHPVRVAA</sequence>
<keyword id="KW-0119">Carbohydrate metabolism</keyword>
<keyword id="KW-0968">Cytoplasmic vesicle</keyword>
<keyword id="KW-1015">Disulfide bond</keyword>
<keyword id="KW-0325">Glycoprotein</keyword>
<keyword id="KW-0326">Glycosidase</keyword>
<keyword id="KW-0378">Hydrolase</keyword>
<keyword id="KW-0479">Metal-binding</keyword>
<keyword id="KW-0732">Signal</keyword>
<dbReference type="EC" id="3.2.1.113" evidence="3"/>
<dbReference type="EMBL" id="EQ963473">
    <property type="protein sequence ID" value="EED56068.1"/>
    <property type="status" value="ALT_SEQ"/>
    <property type="molecule type" value="Genomic_DNA"/>
</dbReference>
<dbReference type="RefSeq" id="XP_002374850.1">
    <property type="nucleotide sequence ID" value="XM_002374809.1"/>
</dbReference>
<dbReference type="SMR" id="B8N417"/>
<dbReference type="STRING" id="332952.B8N417"/>
<dbReference type="GlyCosmos" id="B8N417">
    <property type="glycosylation" value="5 sites, No reported glycans"/>
</dbReference>
<dbReference type="VEuPathDB" id="FungiDB:AFLA_001211"/>
<dbReference type="eggNOG" id="KOG2204">
    <property type="taxonomic scope" value="Eukaryota"/>
</dbReference>
<dbReference type="UniPathway" id="UPA00378"/>
<dbReference type="GO" id="GO:0060205">
    <property type="term" value="C:cytoplasmic vesicle lumen"/>
    <property type="evidence" value="ECO:0007669"/>
    <property type="project" value="UniProtKB-SubCell"/>
</dbReference>
<dbReference type="GO" id="GO:0005783">
    <property type="term" value="C:endoplasmic reticulum"/>
    <property type="evidence" value="ECO:0007669"/>
    <property type="project" value="TreeGrafter"/>
</dbReference>
<dbReference type="GO" id="GO:0016020">
    <property type="term" value="C:membrane"/>
    <property type="evidence" value="ECO:0007669"/>
    <property type="project" value="InterPro"/>
</dbReference>
<dbReference type="GO" id="GO:0005509">
    <property type="term" value="F:calcium ion binding"/>
    <property type="evidence" value="ECO:0007669"/>
    <property type="project" value="InterPro"/>
</dbReference>
<dbReference type="GO" id="GO:0004571">
    <property type="term" value="F:mannosyl-oligosaccharide 1,2-alpha-mannosidase activity"/>
    <property type="evidence" value="ECO:0007669"/>
    <property type="project" value="UniProtKB-EC"/>
</dbReference>
<dbReference type="GO" id="GO:0005975">
    <property type="term" value="P:carbohydrate metabolic process"/>
    <property type="evidence" value="ECO:0007669"/>
    <property type="project" value="InterPro"/>
</dbReference>
<dbReference type="GO" id="GO:0036503">
    <property type="term" value="P:ERAD pathway"/>
    <property type="evidence" value="ECO:0007669"/>
    <property type="project" value="UniProtKB-ARBA"/>
</dbReference>
<dbReference type="GO" id="GO:0006486">
    <property type="term" value="P:protein glycosylation"/>
    <property type="evidence" value="ECO:0007669"/>
    <property type="project" value="UniProtKB-UniPathway"/>
</dbReference>
<dbReference type="FunFam" id="1.50.10.10:FF:000047">
    <property type="entry name" value="Mannosyl-oligosaccharide alpha-1,2-mannosidase"/>
    <property type="match status" value="1"/>
</dbReference>
<dbReference type="Gene3D" id="1.50.10.10">
    <property type="match status" value="1"/>
</dbReference>
<dbReference type="InterPro" id="IPR012341">
    <property type="entry name" value="6hp_glycosidase-like_sf"/>
</dbReference>
<dbReference type="InterPro" id="IPR001382">
    <property type="entry name" value="Glyco_hydro_47"/>
</dbReference>
<dbReference type="InterPro" id="IPR050749">
    <property type="entry name" value="Glycosyl_Hydrolase_47"/>
</dbReference>
<dbReference type="InterPro" id="IPR036026">
    <property type="entry name" value="Seven-hairpin_glycosidases"/>
</dbReference>
<dbReference type="PANTHER" id="PTHR11742:SF101">
    <property type="entry name" value="MANNOSYL-OLIGOSACCHARIDE ALPHA-1,2-MANNOSIDASE 1B"/>
    <property type="match status" value="1"/>
</dbReference>
<dbReference type="PANTHER" id="PTHR11742">
    <property type="entry name" value="MANNOSYL-OLIGOSACCHARIDE ALPHA-1,2-MANNOSIDASE-RELATED"/>
    <property type="match status" value="1"/>
</dbReference>
<dbReference type="Pfam" id="PF01532">
    <property type="entry name" value="Glyco_hydro_47"/>
    <property type="match status" value="1"/>
</dbReference>
<dbReference type="PRINTS" id="PR00747">
    <property type="entry name" value="GLYHDRLASE47"/>
</dbReference>
<dbReference type="SUPFAM" id="SSF48225">
    <property type="entry name" value="Seven-hairpin glycosidases"/>
    <property type="match status" value="1"/>
</dbReference>
<gene>
    <name type="primary">mns1B</name>
    <name type="synonym">msdS</name>
    <name type="ORF">AFLA_033400</name>
</gene>
<evidence type="ECO:0000250" key="1"/>
<evidence type="ECO:0000250" key="2">
    <source>
        <dbReference type="UniProtKB" id="P31723"/>
    </source>
</evidence>
<evidence type="ECO:0000250" key="3">
    <source>
        <dbReference type="UniProtKB" id="P32906"/>
    </source>
</evidence>
<evidence type="ECO:0000250" key="4">
    <source>
        <dbReference type="UniProtKB" id="Q2ULB2"/>
    </source>
</evidence>
<evidence type="ECO:0000255" key="5"/>
<evidence type="ECO:0000305" key="6"/>
<protein>
    <recommendedName>
        <fullName>Probable mannosyl-oligosaccharide alpha-1,2-mannosidase 1B</fullName>
        <ecNumber evidence="3">3.2.1.113</ecNumber>
    </recommendedName>
    <alternativeName>
        <fullName>Class I alpha-mannosidase 1B</fullName>
    </alternativeName>
    <alternativeName>
        <fullName>Man(9)-alpha-mannosidase 1B</fullName>
    </alternativeName>
</protein>
<organism>
    <name type="scientific">Aspergillus flavus (strain ATCC 200026 / FGSC A1120 / IAM 13836 / NRRL 3357 / JCM 12722 / SRRC 167)</name>
    <dbReference type="NCBI Taxonomy" id="332952"/>
    <lineage>
        <taxon>Eukaryota</taxon>
        <taxon>Fungi</taxon>
        <taxon>Dikarya</taxon>
        <taxon>Ascomycota</taxon>
        <taxon>Pezizomycotina</taxon>
        <taxon>Eurotiomycetes</taxon>
        <taxon>Eurotiomycetidae</taxon>
        <taxon>Eurotiales</taxon>
        <taxon>Aspergillaceae</taxon>
        <taxon>Aspergillus</taxon>
        <taxon>Aspergillus subgen. Circumdati</taxon>
    </lineage>
</organism>
<comment type="function">
    <text evidence="1">Involved in the maturation of Asn-linked oligosaccharides. Progressively trims alpha-1,2-linked mannose residues from Man(9)GlcNAc(2) to produce Man(5)GlcNAc(2) (By similarity).</text>
</comment>
<comment type="catalytic activity">
    <reaction evidence="3">
        <text>N(4)-(alpha-D-Man-(1-&gt;2)-alpha-D-Man-(1-&gt;2)-alpha-D-Man-(1-&gt;3)-[alpha-D-Man-(1-&gt;2)-alpha-D-Man-(1-&gt;3)-[alpha-D-Man-(1-&gt;2)-alpha-D-Man-(1-&gt;6)]-alpha-D-Man-(1-&gt;6)]-beta-D-Man-(1-&gt;4)-beta-D-GlcNAc-(1-&gt;4)-beta-D-GlcNAc)-L-asparaginyl-[protein] (N-glucan mannose isomer 9A1,2,3B1,2,3) + 4 H2O = N(4)-(alpha-D-Man-(1-&gt;3)-[alpha-D-Man-(1-&gt;3)-[alpha-D-Man-(1-&gt;6)]-alpha-D-Man-(1-&gt;6)]-beta-D-Man-(1-&gt;4)-beta-D-GlcNAc-(1-&gt;4)-beta-D-GlcNAc)-L-asparaginyl-[protein] (N-glucan mannose isomer 5A1,2) + 4 beta-D-mannose</text>
        <dbReference type="Rhea" id="RHEA:56008"/>
        <dbReference type="Rhea" id="RHEA-COMP:14356"/>
        <dbReference type="Rhea" id="RHEA-COMP:14367"/>
        <dbReference type="ChEBI" id="CHEBI:15377"/>
        <dbReference type="ChEBI" id="CHEBI:28563"/>
        <dbReference type="ChEBI" id="CHEBI:59087"/>
        <dbReference type="ChEBI" id="CHEBI:139493"/>
        <dbReference type="EC" id="3.2.1.113"/>
    </reaction>
</comment>
<comment type="catalytic activity">
    <reaction evidence="3">
        <text>N(4)-(alpha-D-Man-(1-&gt;2)-alpha-D-Man-(1-&gt;2)-alpha-D-Man-(1-&gt;3)-[alpha-D-Man-(1-&gt;3)-[alpha-D-Man-(1-&gt;2)-alpha-D-Man-(1-&gt;6)]-alpha-D-Man-(1-&gt;6)]-beta-D-Man-(1-&gt;4)-beta-D-GlcNAc-(1-&gt;4)-beta-D-GlcNAc)-L-asparaginyl-[protein] (N-glucan mannose isomer 8A1,2,3B1,3) + 3 H2O = N(4)-(alpha-D-Man-(1-&gt;3)-[alpha-D-Man-(1-&gt;3)-[alpha-D-Man-(1-&gt;6)]-alpha-D-Man-(1-&gt;6)]-beta-D-Man-(1-&gt;4)-beta-D-GlcNAc-(1-&gt;4)-beta-D-GlcNAc)-L-asparaginyl-[protein] (N-glucan mannose isomer 5A1,2) + 3 beta-D-mannose</text>
        <dbReference type="Rhea" id="RHEA:56028"/>
        <dbReference type="Rhea" id="RHEA-COMP:14358"/>
        <dbReference type="Rhea" id="RHEA-COMP:14367"/>
        <dbReference type="ChEBI" id="CHEBI:15377"/>
        <dbReference type="ChEBI" id="CHEBI:28563"/>
        <dbReference type="ChEBI" id="CHEBI:59087"/>
        <dbReference type="ChEBI" id="CHEBI:60628"/>
        <dbReference type="EC" id="3.2.1.113"/>
    </reaction>
</comment>
<comment type="cofactor">
    <cofactor evidence="4">
        <name>Ca(2+)</name>
        <dbReference type="ChEBI" id="CHEBI:29108"/>
    </cofactor>
    <cofactor evidence="4">
        <name>Mg(2+)</name>
        <dbReference type="ChEBI" id="CHEBI:18420"/>
    </cofactor>
    <text evidence="4">Ca(2+). Can also use Mg(2+), but with lower efficiency.</text>
</comment>
<comment type="pathway">
    <text evidence="3">Protein modification; protein glycosylation.</text>
</comment>
<comment type="subunit">
    <text evidence="1">Monomer.</text>
</comment>
<comment type="subcellular location">
    <subcellularLocation>
        <location evidence="1">Cytoplasmic vesicle lumen</location>
    </subcellularLocation>
</comment>
<comment type="similarity">
    <text evidence="6">Belongs to the glycosyl hydrolase 47 family.</text>
</comment>
<comment type="sequence caution" evidence="6">
    <conflict type="erroneous gene model prediction">
        <sequence resource="EMBL-CDS" id="EED56068"/>
    </conflict>
</comment>
<comment type="sequence caution" evidence="6">
    <conflict type="frameshift">
        <sequence resource="EMBL-CDS" id="EED56068"/>
    </conflict>
</comment>
<proteinExistence type="inferred from homology"/>